<accession>Q5DYC3</accession>
<comment type="function">
    <text evidence="1">Specifically methylates the adenine in position 1618 of 23S rRNA.</text>
</comment>
<comment type="catalytic activity">
    <reaction evidence="1">
        <text>adenosine(1618) in 23S rRNA + S-adenosyl-L-methionine = N(6)-methyladenosine(1618) in 23S rRNA + S-adenosyl-L-homocysteine + H(+)</text>
        <dbReference type="Rhea" id="RHEA:16497"/>
        <dbReference type="Rhea" id="RHEA-COMP:10229"/>
        <dbReference type="Rhea" id="RHEA-COMP:10231"/>
        <dbReference type="ChEBI" id="CHEBI:15378"/>
        <dbReference type="ChEBI" id="CHEBI:57856"/>
        <dbReference type="ChEBI" id="CHEBI:59789"/>
        <dbReference type="ChEBI" id="CHEBI:74411"/>
        <dbReference type="ChEBI" id="CHEBI:74449"/>
        <dbReference type="EC" id="2.1.1.181"/>
    </reaction>
</comment>
<comment type="subcellular location">
    <subcellularLocation>
        <location evidence="1">Cytoplasm</location>
    </subcellularLocation>
</comment>
<comment type="similarity">
    <text evidence="1">Belongs to the methyltransferase superfamily. METTL16/RlmF family.</text>
</comment>
<reference key="1">
    <citation type="journal article" date="2005" name="Proc. Natl. Acad. Sci. U.S.A.">
        <title>Complete genome sequence of Vibrio fischeri: a symbiotic bacterium with pathogenic congeners.</title>
        <authorList>
            <person name="Ruby E.G."/>
            <person name="Urbanowski M."/>
            <person name="Campbell J."/>
            <person name="Dunn A."/>
            <person name="Faini M."/>
            <person name="Gunsalus R."/>
            <person name="Lostroh P."/>
            <person name="Lupp C."/>
            <person name="McCann J."/>
            <person name="Millikan D."/>
            <person name="Schaefer A."/>
            <person name="Stabb E."/>
            <person name="Stevens A."/>
            <person name="Visick K."/>
            <person name="Whistler C."/>
            <person name="Greenberg E.P."/>
        </authorList>
    </citation>
    <scope>NUCLEOTIDE SEQUENCE [LARGE SCALE GENOMIC DNA]</scope>
    <source>
        <strain>ATCC 700601 / ES114</strain>
    </source>
</reference>
<evidence type="ECO:0000255" key="1">
    <source>
        <dbReference type="HAMAP-Rule" id="MF_01848"/>
    </source>
</evidence>
<gene>
    <name evidence="1" type="primary">rlmF</name>
    <name type="ordered locus">VF_A1153</name>
</gene>
<name>RLMF_ALIF1</name>
<keyword id="KW-0963">Cytoplasm</keyword>
<keyword id="KW-0489">Methyltransferase</keyword>
<keyword id="KW-1185">Reference proteome</keyword>
<keyword id="KW-0698">rRNA processing</keyword>
<keyword id="KW-0949">S-adenosyl-L-methionine</keyword>
<keyword id="KW-0808">Transferase</keyword>
<sequence length="319" mass="35702">MTNTKSNVTKKSLHPRNKHTGNYDFPALIKACAELKPFVETNQYGNESINFSDPQAVKALNKALLAHFYNVPFWDIPQGYLCPPIPGRADYIHNIADLLAITNEGTIPTGKKVKGLDVGVGANCVYLIIGNREYQWSFVGSDIDPQSIKMASFIANNNPSLKGIECRLQKNEENIFKGIIKPTEFFDFTMCNPPFHASEAEATAGTERKQKNLAANKAKKGHAFQEMQNAKALNFGGQKAELWCEGGELAFILKMAQQSREFSLQVQWFTTLISKKENVAELYKELEKIGVKTIKTIEMAQGQKISRFVAWTYQANVNL</sequence>
<organism>
    <name type="scientific">Aliivibrio fischeri (strain ATCC 700601 / ES114)</name>
    <name type="common">Vibrio fischeri</name>
    <dbReference type="NCBI Taxonomy" id="312309"/>
    <lineage>
        <taxon>Bacteria</taxon>
        <taxon>Pseudomonadati</taxon>
        <taxon>Pseudomonadota</taxon>
        <taxon>Gammaproteobacteria</taxon>
        <taxon>Vibrionales</taxon>
        <taxon>Vibrionaceae</taxon>
        <taxon>Aliivibrio</taxon>
    </lineage>
</organism>
<protein>
    <recommendedName>
        <fullName evidence="1">Ribosomal RNA large subunit methyltransferase F</fullName>
        <ecNumber evidence="1">2.1.1.181</ecNumber>
    </recommendedName>
    <alternativeName>
        <fullName evidence="1">23S rRNA mA1618 methyltransferase</fullName>
    </alternativeName>
    <alternativeName>
        <fullName evidence="1">rRNA adenine N-6-methyltransferase</fullName>
    </alternativeName>
</protein>
<feature type="chain" id="PRO_0000349975" description="Ribosomal RNA large subunit methyltransferase F">
    <location>
        <begin position="1"/>
        <end position="319"/>
    </location>
</feature>
<dbReference type="EC" id="2.1.1.181" evidence="1"/>
<dbReference type="EMBL" id="CP000021">
    <property type="protein sequence ID" value="AAW88223.1"/>
    <property type="molecule type" value="Genomic_DNA"/>
</dbReference>
<dbReference type="RefSeq" id="WP_011263945.1">
    <property type="nucleotide sequence ID" value="NC_006841.2"/>
</dbReference>
<dbReference type="RefSeq" id="YP_207111.1">
    <property type="nucleotide sequence ID" value="NC_006841.2"/>
</dbReference>
<dbReference type="SMR" id="Q5DYC3"/>
<dbReference type="STRING" id="312309.VF_A1153"/>
<dbReference type="EnsemblBacteria" id="AAW88223">
    <property type="protein sequence ID" value="AAW88223"/>
    <property type="gene ID" value="VF_A1153"/>
</dbReference>
<dbReference type="GeneID" id="54166475"/>
<dbReference type="KEGG" id="vfi:VF_A1153"/>
<dbReference type="PATRIC" id="fig|312309.11.peg.3753"/>
<dbReference type="eggNOG" id="COG3129">
    <property type="taxonomic scope" value="Bacteria"/>
</dbReference>
<dbReference type="HOGENOM" id="CLU_027534_3_0_6"/>
<dbReference type="OrthoDB" id="1115728at2"/>
<dbReference type="Proteomes" id="UP000000537">
    <property type="component" value="Chromosome II"/>
</dbReference>
<dbReference type="GO" id="GO:0005737">
    <property type="term" value="C:cytoplasm"/>
    <property type="evidence" value="ECO:0007669"/>
    <property type="project" value="UniProtKB-SubCell"/>
</dbReference>
<dbReference type="GO" id="GO:0052907">
    <property type="term" value="F:23S rRNA (adenine(1618)-N(6))-methyltransferase activity"/>
    <property type="evidence" value="ECO:0007669"/>
    <property type="project" value="UniProtKB-EC"/>
</dbReference>
<dbReference type="GO" id="GO:0070475">
    <property type="term" value="P:rRNA base methylation"/>
    <property type="evidence" value="ECO:0007669"/>
    <property type="project" value="TreeGrafter"/>
</dbReference>
<dbReference type="Gene3D" id="3.40.50.150">
    <property type="entry name" value="Vaccinia Virus protein VP39"/>
    <property type="match status" value="1"/>
</dbReference>
<dbReference type="HAMAP" id="MF_01848">
    <property type="entry name" value="23SrRNA_methyltr_F"/>
    <property type="match status" value="1"/>
</dbReference>
<dbReference type="InterPro" id="IPR010286">
    <property type="entry name" value="METTL16/RlmF"/>
</dbReference>
<dbReference type="InterPro" id="IPR016909">
    <property type="entry name" value="rRNA_lsu_MeTfrase_F"/>
</dbReference>
<dbReference type="InterPro" id="IPR029063">
    <property type="entry name" value="SAM-dependent_MTases_sf"/>
</dbReference>
<dbReference type="NCBIfam" id="NF008725">
    <property type="entry name" value="PRK11727.1"/>
    <property type="match status" value="1"/>
</dbReference>
<dbReference type="PANTHER" id="PTHR13393:SF0">
    <property type="entry name" value="RNA N6-ADENOSINE-METHYLTRANSFERASE METTL16"/>
    <property type="match status" value="1"/>
</dbReference>
<dbReference type="PANTHER" id="PTHR13393">
    <property type="entry name" value="SAM-DEPENDENT METHYLTRANSFERASE"/>
    <property type="match status" value="1"/>
</dbReference>
<dbReference type="Pfam" id="PF05971">
    <property type="entry name" value="Methyltransf_10"/>
    <property type="match status" value="1"/>
</dbReference>
<dbReference type="PIRSF" id="PIRSF029038">
    <property type="entry name" value="Mtase_YbiN_prd"/>
    <property type="match status" value="1"/>
</dbReference>
<dbReference type="SUPFAM" id="SSF53335">
    <property type="entry name" value="S-adenosyl-L-methionine-dependent methyltransferases"/>
    <property type="match status" value="1"/>
</dbReference>
<proteinExistence type="inferred from homology"/>